<comment type="function">
    <text evidence="1">Catalyzes the GTP-dependent ribosomal translocation step during translation elongation. During this step, the ribosome changes from the pre-translocational (PRE) to the post-translocational (POST) state as the newly formed A-site-bound peptidyl-tRNA and P-site-bound deacylated tRNA move to the P and E sites, respectively. Catalyzes the coordinated movement of the two tRNA molecules, the mRNA and conformational changes in the ribosome.</text>
</comment>
<comment type="subcellular location">
    <subcellularLocation>
        <location evidence="1">Cytoplasm</location>
    </subcellularLocation>
</comment>
<comment type="similarity">
    <text evidence="1">Belongs to the TRAFAC class translation factor GTPase superfamily. Classic translation factor GTPase family. EF-G/EF-2 subfamily.</text>
</comment>
<feature type="chain" id="PRO_1000202305" description="Elongation factor G">
    <location>
        <begin position="1"/>
        <end position="695"/>
    </location>
</feature>
<feature type="domain" description="tr-type G">
    <location>
        <begin position="8"/>
        <end position="282"/>
    </location>
</feature>
<feature type="binding site" evidence="1">
    <location>
        <begin position="17"/>
        <end position="24"/>
    </location>
    <ligand>
        <name>GTP</name>
        <dbReference type="ChEBI" id="CHEBI:37565"/>
    </ligand>
</feature>
<feature type="binding site" evidence="1">
    <location>
        <begin position="81"/>
        <end position="85"/>
    </location>
    <ligand>
        <name>GTP</name>
        <dbReference type="ChEBI" id="CHEBI:37565"/>
    </ligand>
</feature>
<feature type="binding site" evidence="1">
    <location>
        <begin position="135"/>
        <end position="138"/>
    </location>
    <ligand>
        <name>GTP</name>
        <dbReference type="ChEBI" id="CHEBI:37565"/>
    </ligand>
</feature>
<name>EFG_LISMC</name>
<accession>C1KZK7</accession>
<reference key="1">
    <citation type="journal article" date="2012" name="BMC Genomics">
        <title>Comparative genomics and transcriptomics of lineages I, II, and III strains of Listeria monocytogenes.</title>
        <authorList>
            <person name="Hain T."/>
            <person name="Ghai R."/>
            <person name="Billion A."/>
            <person name="Kuenne C.T."/>
            <person name="Steinweg C."/>
            <person name="Izar B."/>
            <person name="Mohamed W."/>
            <person name="Mraheil M."/>
            <person name="Domann E."/>
            <person name="Schaffrath S."/>
            <person name="Karst U."/>
            <person name="Goesmann A."/>
            <person name="Oehm S."/>
            <person name="Puhler A."/>
            <person name="Merkl R."/>
            <person name="Vorwerk S."/>
            <person name="Glaser P."/>
            <person name="Garrido P."/>
            <person name="Rusniok C."/>
            <person name="Buchrieser C."/>
            <person name="Goebel W."/>
            <person name="Chakraborty T."/>
        </authorList>
    </citation>
    <scope>NUCLEOTIDE SEQUENCE [LARGE SCALE GENOMIC DNA]</scope>
    <source>
        <strain>CLIP80459</strain>
    </source>
</reference>
<organism>
    <name type="scientific">Listeria monocytogenes serotype 4b (strain CLIP80459)</name>
    <dbReference type="NCBI Taxonomy" id="568819"/>
    <lineage>
        <taxon>Bacteria</taxon>
        <taxon>Bacillati</taxon>
        <taxon>Bacillota</taxon>
        <taxon>Bacilli</taxon>
        <taxon>Bacillales</taxon>
        <taxon>Listeriaceae</taxon>
        <taxon>Listeria</taxon>
    </lineage>
</organism>
<sequence length="695" mass="76850">MAREFSLEKTRNIGIMAHIDAGKTTTTERILFYTGRIHKIGETHEGASQMDWMEQEQERGITITSAATTAQWKGYRVNIIDTPGHVDFTVEVERSLRVLDGAVAVLDAQSGVEPQTETVWRQATTYGVPRVVFVNKMDKIGADFLYSVGTLHERLAANAHPIQLPIGAEDTFEGIIDLIEMNALYYEDDLGNDPHIKEIPADLKDLADEYRGKLVEAVAELDEELMMKYLEGEEITKEELKAGIRKGTLNVEFYPVVCGTAFKNKGVQPMLDAVLDYLPAPTDVPAINGVLPDGEEAARHADDSEPFSSLAFKVMTDPYVGRLTFFRVYSGTLNSGSYVQNSTKGKRERVGRILQMHANHREEISIVYAGDIAAAVGLKDTTTGDTLCDEKEQIILESMEFPEPVIQVAIEPKSKADQDKMGQALAKLAEEDPTFRAETDQETGQTLISGMGELHLDILVDRMRREFRVEANVGDPQVSYRETFRKSAQVEGKFVRQSGGRGQYGHVWIEFGPNEEGKGFEFENAIVGGVVPREYIPAVQAGLEGALDNGVLAGYPLIDIKAKLYDGSYHDVDSNEMAFKVAASMALRNAAKKCDPVILEPMMAVEVVIPEEYLGDIMGNITSRRGRVDGMEARGNAQVVRAFVPLANMFGYATHLRSGTQGRGVYTMQFDHYEEVPKSIAEEIIKANGGNNKED</sequence>
<keyword id="KW-0963">Cytoplasm</keyword>
<keyword id="KW-0251">Elongation factor</keyword>
<keyword id="KW-0342">GTP-binding</keyword>
<keyword id="KW-0547">Nucleotide-binding</keyword>
<keyword id="KW-0648">Protein biosynthesis</keyword>
<gene>
    <name evidence="1" type="primary">fusA</name>
    <name type="ordered locus">Lm4b_02626</name>
</gene>
<dbReference type="EMBL" id="FM242711">
    <property type="protein sequence ID" value="CAS06380.1"/>
    <property type="molecule type" value="Genomic_DNA"/>
</dbReference>
<dbReference type="RefSeq" id="WP_003724965.1">
    <property type="nucleotide sequence ID" value="NC_012488.1"/>
</dbReference>
<dbReference type="SMR" id="C1KZK7"/>
<dbReference type="GeneID" id="87012818"/>
<dbReference type="KEGG" id="lmc:Lm4b_02626"/>
<dbReference type="HOGENOM" id="CLU_002794_4_1_9"/>
<dbReference type="GO" id="GO:0005737">
    <property type="term" value="C:cytoplasm"/>
    <property type="evidence" value="ECO:0007669"/>
    <property type="project" value="UniProtKB-SubCell"/>
</dbReference>
<dbReference type="GO" id="GO:0005525">
    <property type="term" value="F:GTP binding"/>
    <property type="evidence" value="ECO:0007669"/>
    <property type="project" value="UniProtKB-UniRule"/>
</dbReference>
<dbReference type="GO" id="GO:0003924">
    <property type="term" value="F:GTPase activity"/>
    <property type="evidence" value="ECO:0007669"/>
    <property type="project" value="InterPro"/>
</dbReference>
<dbReference type="GO" id="GO:0003746">
    <property type="term" value="F:translation elongation factor activity"/>
    <property type="evidence" value="ECO:0007669"/>
    <property type="project" value="UniProtKB-UniRule"/>
</dbReference>
<dbReference type="GO" id="GO:0032790">
    <property type="term" value="P:ribosome disassembly"/>
    <property type="evidence" value="ECO:0007669"/>
    <property type="project" value="TreeGrafter"/>
</dbReference>
<dbReference type="CDD" id="cd01886">
    <property type="entry name" value="EF-G"/>
    <property type="match status" value="1"/>
</dbReference>
<dbReference type="CDD" id="cd16262">
    <property type="entry name" value="EFG_III"/>
    <property type="match status" value="1"/>
</dbReference>
<dbReference type="CDD" id="cd01434">
    <property type="entry name" value="EFG_mtEFG1_IV"/>
    <property type="match status" value="1"/>
</dbReference>
<dbReference type="CDD" id="cd03713">
    <property type="entry name" value="EFG_mtEFG_C"/>
    <property type="match status" value="1"/>
</dbReference>
<dbReference type="CDD" id="cd04088">
    <property type="entry name" value="EFG_mtEFG_II"/>
    <property type="match status" value="1"/>
</dbReference>
<dbReference type="FunFam" id="2.40.30.10:FF:000006">
    <property type="entry name" value="Elongation factor G"/>
    <property type="match status" value="1"/>
</dbReference>
<dbReference type="FunFam" id="3.30.230.10:FF:000003">
    <property type="entry name" value="Elongation factor G"/>
    <property type="match status" value="1"/>
</dbReference>
<dbReference type="FunFam" id="3.30.70.240:FF:000001">
    <property type="entry name" value="Elongation factor G"/>
    <property type="match status" value="1"/>
</dbReference>
<dbReference type="FunFam" id="3.30.70.870:FF:000001">
    <property type="entry name" value="Elongation factor G"/>
    <property type="match status" value="1"/>
</dbReference>
<dbReference type="FunFam" id="3.40.50.300:FF:000029">
    <property type="entry name" value="Elongation factor G"/>
    <property type="match status" value="1"/>
</dbReference>
<dbReference type="Gene3D" id="3.30.230.10">
    <property type="match status" value="1"/>
</dbReference>
<dbReference type="Gene3D" id="3.30.70.240">
    <property type="match status" value="1"/>
</dbReference>
<dbReference type="Gene3D" id="3.30.70.870">
    <property type="entry name" value="Elongation Factor G (Translational Gtpase), domain 3"/>
    <property type="match status" value="1"/>
</dbReference>
<dbReference type="Gene3D" id="3.40.50.300">
    <property type="entry name" value="P-loop containing nucleotide triphosphate hydrolases"/>
    <property type="match status" value="1"/>
</dbReference>
<dbReference type="Gene3D" id="2.40.30.10">
    <property type="entry name" value="Translation factors"/>
    <property type="match status" value="1"/>
</dbReference>
<dbReference type="HAMAP" id="MF_00054_B">
    <property type="entry name" value="EF_G_EF_2_B"/>
    <property type="match status" value="1"/>
</dbReference>
<dbReference type="InterPro" id="IPR041095">
    <property type="entry name" value="EFG_II"/>
</dbReference>
<dbReference type="InterPro" id="IPR009022">
    <property type="entry name" value="EFG_III"/>
</dbReference>
<dbReference type="InterPro" id="IPR035647">
    <property type="entry name" value="EFG_III/V"/>
</dbReference>
<dbReference type="InterPro" id="IPR047872">
    <property type="entry name" value="EFG_IV"/>
</dbReference>
<dbReference type="InterPro" id="IPR035649">
    <property type="entry name" value="EFG_V"/>
</dbReference>
<dbReference type="InterPro" id="IPR000640">
    <property type="entry name" value="EFG_V-like"/>
</dbReference>
<dbReference type="InterPro" id="IPR004161">
    <property type="entry name" value="EFTu-like_2"/>
</dbReference>
<dbReference type="InterPro" id="IPR031157">
    <property type="entry name" value="G_TR_CS"/>
</dbReference>
<dbReference type="InterPro" id="IPR027417">
    <property type="entry name" value="P-loop_NTPase"/>
</dbReference>
<dbReference type="InterPro" id="IPR020568">
    <property type="entry name" value="Ribosomal_Su5_D2-typ_SF"/>
</dbReference>
<dbReference type="InterPro" id="IPR014721">
    <property type="entry name" value="Ribsml_uS5_D2-typ_fold_subgr"/>
</dbReference>
<dbReference type="InterPro" id="IPR005225">
    <property type="entry name" value="Small_GTP-bd"/>
</dbReference>
<dbReference type="InterPro" id="IPR000795">
    <property type="entry name" value="T_Tr_GTP-bd_dom"/>
</dbReference>
<dbReference type="InterPro" id="IPR009000">
    <property type="entry name" value="Transl_B-barrel_sf"/>
</dbReference>
<dbReference type="InterPro" id="IPR004540">
    <property type="entry name" value="Transl_elong_EFG/EF2"/>
</dbReference>
<dbReference type="InterPro" id="IPR005517">
    <property type="entry name" value="Transl_elong_EFG/EF2_IV"/>
</dbReference>
<dbReference type="NCBIfam" id="TIGR00484">
    <property type="entry name" value="EF-G"/>
    <property type="match status" value="1"/>
</dbReference>
<dbReference type="NCBIfam" id="NF009379">
    <property type="entry name" value="PRK12740.1-3"/>
    <property type="match status" value="1"/>
</dbReference>
<dbReference type="NCBIfam" id="NF009381">
    <property type="entry name" value="PRK12740.1-5"/>
    <property type="match status" value="1"/>
</dbReference>
<dbReference type="NCBIfam" id="TIGR00231">
    <property type="entry name" value="small_GTP"/>
    <property type="match status" value="1"/>
</dbReference>
<dbReference type="PANTHER" id="PTHR43261:SF1">
    <property type="entry name" value="RIBOSOME-RELEASING FACTOR 2, MITOCHONDRIAL"/>
    <property type="match status" value="1"/>
</dbReference>
<dbReference type="PANTHER" id="PTHR43261">
    <property type="entry name" value="TRANSLATION ELONGATION FACTOR G-RELATED"/>
    <property type="match status" value="1"/>
</dbReference>
<dbReference type="Pfam" id="PF00679">
    <property type="entry name" value="EFG_C"/>
    <property type="match status" value="1"/>
</dbReference>
<dbReference type="Pfam" id="PF14492">
    <property type="entry name" value="EFG_III"/>
    <property type="match status" value="1"/>
</dbReference>
<dbReference type="Pfam" id="PF03764">
    <property type="entry name" value="EFG_IV"/>
    <property type="match status" value="1"/>
</dbReference>
<dbReference type="Pfam" id="PF00009">
    <property type="entry name" value="GTP_EFTU"/>
    <property type="match status" value="1"/>
</dbReference>
<dbReference type="Pfam" id="PF03144">
    <property type="entry name" value="GTP_EFTU_D2"/>
    <property type="match status" value="1"/>
</dbReference>
<dbReference type="PRINTS" id="PR00315">
    <property type="entry name" value="ELONGATNFCT"/>
</dbReference>
<dbReference type="SMART" id="SM00838">
    <property type="entry name" value="EFG_C"/>
    <property type="match status" value="1"/>
</dbReference>
<dbReference type="SMART" id="SM00889">
    <property type="entry name" value="EFG_IV"/>
    <property type="match status" value="1"/>
</dbReference>
<dbReference type="SUPFAM" id="SSF54980">
    <property type="entry name" value="EF-G C-terminal domain-like"/>
    <property type="match status" value="2"/>
</dbReference>
<dbReference type="SUPFAM" id="SSF52540">
    <property type="entry name" value="P-loop containing nucleoside triphosphate hydrolases"/>
    <property type="match status" value="1"/>
</dbReference>
<dbReference type="SUPFAM" id="SSF54211">
    <property type="entry name" value="Ribosomal protein S5 domain 2-like"/>
    <property type="match status" value="1"/>
</dbReference>
<dbReference type="SUPFAM" id="SSF50447">
    <property type="entry name" value="Translation proteins"/>
    <property type="match status" value="1"/>
</dbReference>
<dbReference type="PROSITE" id="PS00301">
    <property type="entry name" value="G_TR_1"/>
    <property type="match status" value="1"/>
</dbReference>
<dbReference type="PROSITE" id="PS51722">
    <property type="entry name" value="G_TR_2"/>
    <property type="match status" value="1"/>
</dbReference>
<evidence type="ECO:0000255" key="1">
    <source>
        <dbReference type="HAMAP-Rule" id="MF_00054"/>
    </source>
</evidence>
<protein>
    <recommendedName>
        <fullName evidence="1">Elongation factor G</fullName>
        <shortName evidence="1">EF-G</shortName>
    </recommendedName>
</protein>
<proteinExistence type="inferred from homology"/>